<protein>
    <recommendedName>
        <fullName>Putative uncharacterized protein YPR177C</fullName>
    </recommendedName>
</protein>
<proteinExistence type="uncertain"/>
<dbReference type="EMBL" id="U25842">
    <property type="protein sequence ID" value="AAB68119.1"/>
    <property type="molecule type" value="Genomic_DNA"/>
</dbReference>
<dbReference type="PIR" id="S69460">
    <property type="entry name" value="S69460"/>
</dbReference>
<dbReference type="DIP" id="DIP-2834N"/>
<dbReference type="IntAct" id="O13575">
    <property type="interactions" value="1"/>
</dbReference>
<dbReference type="MINT" id="O13575"/>
<dbReference type="PaxDb" id="4932-YPR177C"/>
<dbReference type="EnsemblFungi" id="YPR177C_mRNA">
    <property type="protein sequence ID" value="YPR177C"/>
    <property type="gene ID" value="YPR177C"/>
</dbReference>
<dbReference type="AGR" id="SGD:S000006381"/>
<dbReference type="SGD" id="S000006381">
    <property type="gene designation" value="YPR177C"/>
</dbReference>
<dbReference type="HOGENOM" id="CLU_2017001_0_0_1"/>
<name>YP177_YEAST</name>
<reference key="1">
    <citation type="journal article" date="1997" name="Nature">
        <title>The nucleotide sequence of Saccharomyces cerevisiae chromosome XVI.</title>
        <authorList>
            <person name="Bussey H."/>
            <person name="Storms R.K."/>
            <person name="Ahmed A."/>
            <person name="Albermann K."/>
            <person name="Allen E."/>
            <person name="Ansorge W."/>
            <person name="Araujo R."/>
            <person name="Aparicio A."/>
            <person name="Barrell B.G."/>
            <person name="Badcock K."/>
            <person name="Benes V."/>
            <person name="Botstein D."/>
            <person name="Bowman S."/>
            <person name="Brueckner M."/>
            <person name="Carpenter J."/>
            <person name="Cherry J.M."/>
            <person name="Chung E."/>
            <person name="Churcher C.M."/>
            <person name="Coster F."/>
            <person name="Davis K."/>
            <person name="Davis R.W."/>
            <person name="Dietrich F.S."/>
            <person name="Delius H."/>
            <person name="DiPaolo T."/>
            <person name="Dubois E."/>
            <person name="Duesterhoeft A."/>
            <person name="Duncan M."/>
            <person name="Floeth M."/>
            <person name="Fortin N."/>
            <person name="Friesen J.D."/>
            <person name="Fritz C."/>
            <person name="Goffeau A."/>
            <person name="Hall J."/>
            <person name="Hebling U."/>
            <person name="Heumann K."/>
            <person name="Hilbert H."/>
            <person name="Hillier L.W."/>
            <person name="Hunicke-Smith S."/>
            <person name="Hyman R.W."/>
            <person name="Johnston M."/>
            <person name="Kalman S."/>
            <person name="Kleine K."/>
            <person name="Komp C."/>
            <person name="Kurdi O."/>
            <person name="Lashkari D."/>
            <person name="Lew H."/>
            <person name="Lin A."/>
            <person name="Lin D."/>
            <person name="Louis E.J."/>
            <person name="Marathe R."/>
            <person name="Messenguy F."/>
            <person name="Mewes H.-W."/>
            <person name="Mirtipati S."/>
            <person name="Moestl D."/>
            <person name="Mueller-Auer S."/>
            <person name="Namath A."/>
            <person name="Nentwich U."/>
            <person name="Oefner P."/>
            <person name="Pearson D."/>
            <person name="Petel F.X."/>
            <person name="Pohl T.M."/>
            <person name="Purnelle B."/>
            <person name="Rajandream M.A."/>
            <person name="Rechmann S."/>
            <person name="Rieger M."/>
            <person name="Riles L."/>
            <person name="Roberts D."/>
            <person name="Schaefer M."/>
            <person name="Scharfe M."/>
            <person name="Scherens B."/>
            <person name="Schramm S."/>
            <person name="Schroeder M."/>
            <person name="Sdicu A.-M."/>
            <person name="Tettelin H."/>
            <person name="Urrestarazu L.A."/>
            <person name="Ushinsky S."/>
            <person name="Vierendeels F."/>
            <person name="Vissers S."/>
            <person name="Voss H."/>
            <person name="Walsh S.V."/>
            <person name="Wambutt R."/>
            <person name="Wang Y."/>
            <person name="Wedler E."/>
            <person name="Wedler H."/>
            <person name="Winnett E."/>
            <person name="Zhong W.-W."/>
            <person name="Zollner A."/>
            <person name="Vo D.H."/>
            <person name="Hani J."/>
        </authorList>
    </citation>
    <scope>NUCLEOTIDE SEQUENCE [LARGE SCALE GENOMIC DNA]</scope>
    <source>
        <strain>ATCC 204508 / S288c</strain>
    </source>
</reference>
<reference key="2">
    <citation type="journal article" date="2014" name="G3 (Bethesda)">
        <title>The reference genome sequence of Saccharomyces cerevisiae: Then and now.</title>
        <authorList>
            <person name="Engel S.R."/>
            <person name="Dietrich F.S."/>
            <person name="Fisk D.G."/>
            <person name="Binkley G."/>
            <person name="Balakrishnan R."/>
            <person name="Costanzo M.C."/>
            <person name="Dwight S.S."/>
            <person name="Hitz B.C."/>
            <person name="Karra K."/>
            <person name="Nash R.S."/>
            <person name="Weng S."/>
            <person name="Wong E.D."/>
            <person name="Lloyd P."/>
            <person name="Skrzypek M.S."/>
            <person name="Miyasato S.R."/>
            <person name="Simison M."/>
            <person name="Cherry J.M."/>
        </authorList>
    </citation>
    <scope>GENOME REANNOTATION</scope>
    <source>
        <strain>ATCC 204508 / S288c</strain>
    </source>
</reference>
<evidence type="ECO:0000305" key="1"/>
<evidence type="ECO:0000305" key="2">
    <source>
    </source>
</evidence>
<accession>O13575</accession>
<sequence>MSSDVAGVKKSSSSSSSTSSPFMFSMLLMFSRSISSTIKISANRILLCCTSSFSTTSGFFKIESNRLTSRSSSGIFSRTACNRSCGNCFSISAVLSFCVAPLCCKSTGRFSSAIYLLIFRSTR</sequence>
<gene>
    <name type="ordered locus">YPR177C</name>
    <name type="ORF">P9705.12A</name>
</gene>
<organism>
    <name type="scientific">Saccharomyces cerevisiae (strain ATCC 204508 / S288c)</name>
    <name type="common">Baker's yeast</name>
    <dbReference type="NCBI Taxonomy" id="559292"/>
    <lineage>
        <taxon>Eukaryota</taxon>
        <taxon>Fungi</taxon>
        <taxon>Dikarya</taxon>
        <taxon>Ascomycota</taxon>
        <taxon>Saccharomycotina</taxon>
        <taxon>Saccharomycetes</taxon>
        <taxon>Saccharomycetales</taxon>
        <taxon>Saccharomycetaceae</taxon>
        <taxon>Saccharomyces</taxon>
    </lineage>
</organism>
<feature type="chain" id="PRO_0000299833" description="Putative uncharacterized protein YPR177C">
    <location>
        <begin position="1"/>
        <end position="123"/>
    </location>
</feature>
<comment type="miscellaneous">
    <text evidence="1">Almost completely overlaps PRP4.</text>
</comment>
<comment type="caution">
    <text evidence="2">Product of a dubious gene prediction unlikely to encode a functional protein. Because of that it is not part of the S.cerevisiae S288c complete/reference proteome set.</text>
</comment>